<accession>B3PC16</accession>
<proteinExistence type="inferred from homology"/>
<dbReference type="EC" id="6.3.2.6" evidence="1"/>
<dbReference type="EMBL" id="CP000934">
    <property type="protein sequence ID" value="ACE84580.1"/>
    <property type="molecule type" value="Genomic_DNA"/>
</dbReference>
<dbReference type="RefSeq" id="WP_012488420.1">
    <property type="nucleotide sequence ID" value="NC_010995.1"/>
</dbReference>
<dbReference type="SMR" id="B3PC16"/>
<dbReference type="STRING" id="498211.CJA_2827"/>
<dbReference type="KEGG" id="cja:CJA_2827"/>
<dbReference type="eggNOG" id="COG0152">
    <property type="taxonomic scope" value="Bacteria"/>
</dbReference>
<dbReference type="HOGENOM" id="CLU_061495_2_0_6"/>
<dbReference type="OrthoDB" id="9801549at2"/>
<dbReference type="UniPathway" id="UPA00074">
    <property type="reaction ID" value="UER00131"/>
</dbReference>
<dbReference type="Proteomes" id="UP000001036">
    <property type="component" value="Chromosome"/>
</dbReference>
<dbReference type="GO" id="GO:0005829">
    <property type="term" value="C:cytosol"/>
    <property type="evidence" value="ECO:0007669"/>
    <property type="project" value="TreeGrafter"/>
</dbReference>
<dbReference type="GO" id="GO:0005524">
    <property type="term" value="F:ATP binding"/>
    <property type="evidence" value="ECO:0007669"/>
    <property type="project" value="UniProtKB-KW"/>
</dbReference>
<dbReference type="GO" id="GO:0004639">
    <property type="term" value="F:phosphoribosylaminoimidazolesuccinocarboxamide synthase activity"/>
    <property type="evidence" value="ECO:0007669"/>
    <property type="project" value="UniProtKB-UniRule"/>
</dbReference>
<dbReference type="GO" id="GO:0006189">
    <property type="term" value="P:'de novo' IMP biosynthetic process"/>
    <property type="evidence" value="ECO:0007669"/>
    <property type="project" value="UniProtKB-UniRule"/>
</dbReference>
<dbReference type="GO" id="GO:0009236">
    <property type="term" value="P:cobalamin biosynthetic process"/>
    <property type="evidence" value="ECO:0007669"/>
    <property type="project" value="InterPro"/>
</dbReference>
<dbReference type="CDD" id="cd01415">
    <property type="entry name" value="SAICAR_synt_PurC"/>
    <property type="match status" value="1"/>
</dbReference>
<dbReference type="FunFam" id="3.30.200.20:FF:000086">
    <property type="entry name" value="Phosphoribosylaminoimidazole-succinocarboxamide synthase"/>
    <property type="match status" value="1"/>
</dbReference>
<dbReference type="FunFam" id="3.30.470.20:FF:000006">
    <property type="entry name" value="Phosphoribosylaminoimidazole-succinocarboxamide synthase"/>
    <property type="match status" value="1"/>
</dbReference>
<dbReference type="Gene3D" id="3.30.470.20">
    <property type="entry name" value="ATP-grasp fold, B domain"/>
    <property type="match status" value="1"/>
</dbReference>
<dbReference type="Gene3D" id="3.30.200.20">
    <property type="entry name" value="Phosphorylase Kinase, domain 1"/>
    <property type="match status" value="1"/>
</dbReference>
<dbReference type="HAMAP" id="MF_00137">
    <property type="entry name" value="SAICAR_synth"/>
    <property type="match status" value="1"/>
</dbReference>
<dbReference type="InterPro" id="IPR028923">
    <property type="entry name" value="SAICAR_synt/ADE2_N"/>
</dbReference>
<dbReference type="InterPro" id="IPR033934">
    <property type="entry name" value="SAICAR_synt_PurC"/>
</dbReference>
<dbReference type="InterPro" id="IPR001636">
    <property type="entry name" value="SAICAR_synth"/>
</dbReference>
<dbReference type="InterPro" id="IPR050089">
    <property type="entry name" value="SAICAR_synthetase"/>
</dbReference>
<dbReference type="InterPro" id="IPR018236">
    <property type="entry name" value="SAICAR_synthetase_CS"/>
</dbReference>
<dbReference type="NCBIfam" id="TIGR00081">
    <property type="entry name" value="purC"/>
    <property type="match status" value="1"/>
</dbReference>
<dbReference type="PANTHER" id="PTHR43599">
    <property type="entry name" value="MULTIFUNCTIONAL PROTEIN ADE2"/>
    <property type="match status" value="1"/>
</dbReference>
<dbReference type="PANTHER" id="PTHR43599:SF3">
    <property type="entry name" value="SI:DKEY-6E2.2"/>
    <property type="match status" value="1"/>
</dbReference>
<dbReference type="Pfam" id="PF01259">
    <property type="entry name" value="SAICAR_synt"/>
    <property type="match status" value="1"/>
</dbReference>
<dbReference type="SUPFAM" id="SSF56104">
    <property type="entry name" value="SAICAR synthase-like"/>
    <property type="match status" value="1"/>
</dbReference>
<dbReference type="PROSITE" id="PS01057">
    <property type="entry name" value="SAICAR_SYNTHETASE_1"/>
    <property type="match status" value="1"/>
</dbReference>
<organism>
    <name type="scientific">Cellvibrio japonicus (strain Ueda107)</name>
    <name type="common">Pseudomonas fluorescens subsp. cellulosa</name>
    <dbReference type="NCBI Taxonomy" id="498211"/>
    <lineage>
        <taxon>Bacteria</taxon>
        <taxon>Pseudomonadati</taxon>
        <taxon>Pseudomonadota</taxon>
        <taxon>Gammaproteobacteria</taxon>
        <taxon>Cellvibrionales</taxon>
        <taxon>Cellvibrionaceae</taxon>
        <taxon>Cellvibrio</taxon>
    </lineage>
</organism>
<evidence type="ECO:0000255" key="1">
    <source>
        <dbReference type="HAMAP-Rule" id="MF_00137"/>
    </source>
</evidence>
<keyword id="KW-0067">ATP-binding</keyword>
<keyword id="KW-0436">Ligase</keyword>
<keyword id="KW-0547">Nucleotide-binding</keyword>
<keyword id="KW-0658">Purine biosynthesis</keyword>
<keyword id="KW-1185">Reference proteome</keyword>
<comment type="catalytic activity">
    <reaction evidence="1">
        <text>5-amino-1-(5-phospho-D-ribosyl)imidazole-4-carboxylate + L-aspartate + ATP = (2S)-2-[5-amino-1-(5-phospho-beta-D-ribosyl)imidazole-4-carboxamido]succinate + ADP + phosphate + 2 H(+)</text>
        <dbReference type="Rhea" id="RHEA:22628"/>
        <dbReference type="ChEBI" id="CHEBI:15378"/>
        <dbReference type="ChEBI" id="CHEBI:29991"/>
        <dbReference type="ChEBI" id="CHEBI:30616"/>
        <dbReference type="ChEBI" id="CHEBI:43474"/>
        <dbReference type="ChEBI" id="CHEBI:58443"/>
        <dbReference type="ChEBI" id="CHEBI:77657"/>
        <dbReference type="ChEBI" id="CHEBI:456216"/>
        <dbReference type="EC" id="6.3.2.6"/>
    </reaction>
</comment>
<comment type="pathway">
    <text evidence="1">Purine metabolism; IMP biosynthesis via de novo pathway; 5-amino-1-(5-phospho-D-ribosyl)imidazole-4-carboxamide from 5-amino-1-(5-phospho-D-ribosyl)imidazole-4-carboxylate: step 1/2.</text>
</comment>
<comment type="similarity">
    <text evidence="1">Belongs to the SAICAR synthetase family.</text>
</comment>
<feature type="chain" id="PRO_1000095968" description="Phosphoribosylaminoimidazole-succinocarboxamide synthase">
    <location>
        <begin position="1"/>
        <end position="236"/>
    </location>
</feature>
<gene>
    <name evidence="1" type="primary">purC</name>
    <name type="ordered locus">CJA_2827</name>
</gene>
<sequence>MEKREQLYAGKAKSIFNTDDPDHLVMLFRNDTSAFDGKRVEQLDRKGMVNNKFNAFIMGKLQAAGIPTHFVKLLSDTEALVKKMDMIPVECVVRNLAAGSLVRRLGVQEGQVLNPPTFELFLKNDALGDPMINESHVESFGWATREQLARMKELTFKINEVLKDLFAAGNMLLVDFKVEFGLHKGEVILGDEFSPDGCRLWDKDTREKLDKDRFRQNLGNVVESYELVGQRLGLTF</sequence>
<protein>
    <recommendedName>
        <fullName evidence="1">Phosphoribosylaminoimidazole-succinocarboxamide synthase</fullName>
        <ecNumber evidence="1">6.3.2.6</ecNumber>
    </recommendedName>
    <alternativeName>
        <fullName evidence="1">SAICAR synthetase</fullName>
    </alternativeName>
</protein>
<name>PUR7_CELJU</name>
<reference key="1">
    <citation type="journal article" date="2008" name="J. Bacteriol.">
        <title>Insights into plant cell wall degradation from the genome sequence of the soil bacterium Cellvibrio japonicus.</title>
        <authorList>
            <person name="DeBoy R.T."/>
            <person name="Mongodin E.F."/>
            <person name="Fouts D.E."/>
            <person name="Tailford L.E."/>
            <person name="Khouri H."/>
            <person name="Emerson J.B."/>
            <person name="Mohamoud Y."/>
            <person name="Watkins K."/>
            <person name="Henrissat B."/>
            <person name="Gilbert H.J."/>
            <person name="Nelson K.E."/>
        </authorList>
    </citation>
    <scope>NUCLEOTIDE SEQUENCE [LARGE SCALE GENOMIC DNA]</scope>
    <source>
        <strain>Ueda107</strain>
    </source>
</reference>